<comment type="function">
    <text evidence="1">Catalyzes the conversion of dihydroorotate to orotate with fumarate as the electron acceptor.</text>
</comment>
<comment type="catalytic activity">
    <reaction>
        <text>(S)-dihydroorotate + fumarate = orotate + succinate</text>
        <dbReference type="Rhea" id="RHEA:30059"/>
        <dbReference type="ChEBI" id="CHEBI:29806"/>
        <dbReference type="ChEBI" id="CHEBI:30031"/>
        <dbReference type="ChEBI" id="CHEBI:30839"/>
        <dbReference type="ChEBI" id="CHEBI:30864"/>
        <dbReference type="EC" id="1.3.98.1"/>
    </reaction>
</comment>
<comment type="cofactor">
    <cofactor evidence="1">
        <name>FMN</name>
        <dbReference type="ChEBI" id="CHEBI:58210"/>
    </cofactor>
    <text evidence="1">Binds 1 FMN per subunit.</text>
</comment>
<comment type="pathway">
    <text>Pyrimidine metabolism; UMP biosynthesis via de novo pathway.</text>
</comment>
<comment type="subunit">
    <text evidence="1">Homodimer.</text>
</comment>
<comment type="subcellular location">
    <subcellularLocation>
        <location evidence="1">Cytoplasm</location>
    </subcellularLocation>
</comment>
<comment type="similarity">
    <text evidence="2">Belongs to the dihydroorotate dehydrogenase family. Type 1 subfamily.</text>
</comment>
<sequence>MDLSVELFGIRFKNPVWVASGTFGYGVEAAEIYDISKLGAVVTKGLSLKERLGNETPRIVETPCGMLNSIGLQNPGVEKFLKEIYPKIKDVDTHFIANVFGETEEEYVEVCMALEDADKIVAYELNVSCPNVKKGGILFGHDPVILGNLVDRIKAKIKKPLLVKLSPNVTDVTEFAKVCIENGADGLVLINTLMGMKINIWKRKPDLATKTGGLSGPAILPIAVRMIYQVYEKFGDRIPIIGVGGITTWEDAMEHVMAGASAVQVGTANFYEPLAPLKVIEGIENFMKSQNIKDFKELIGIAHRVE</sequence>
<feature type="chain" id="PRO_0000148386" description="Putative dihydroorotate dehydrogenase A (fumarate)">
    <location>
        <begin position="1"/>
        <end position="306"/>
    </location>
</feature>
<feature type="active site" description="Nucleophile">
    <location>
        <position position="129"/>
    </location>
</feature>
<feature type="binding site" evidence="1">
    <location>
        <position position="20"/>
    </location>
    <ligand>
        <name>FMN</name>
        <dbReference type="ChEBI" id="CHEBI:58210"/>
    </ligand>
</feature>
<feature type="binding site" evidence="1">
    <location>
        <begin position="44"/>
        <end position="45"/>
    </location>
    <ligand>
        <name>FMN</name>
        <dbReference type="ChEBI" id="CHEBI:58210"/>
    </ligand>
</feature>
<feature type="binding site" evidence="1">
    <location>
        <position position="44"/>
    </location>
    <ligand>
        <name>substrate</name>
    </ligand>
</feature>
<feature type="binding site" evidence="1">
    <location>
        <begin position="68"/>
        <end position="72"/>
    </location>
    <ligand>
        <name>substrate</name>
    </ligand>
</feature>
<feature type="binding site" evidence="1">
    <location>
        <position position="98"/>
    </location>
    <ligand>
        <name>FMN</name>
        <dbReference type="ChEBI" id="CHEBI:58210"/>
    </ligand>
</feature>
<feature type="binding site" evidence="1">
    <location>
        <position position="126"/>
    </location>
    <ligand>
        <name>FMN</name>
        <dbReference type="ChEBI" id="CHEBI:58210"/>
    </ligand>
</feature>
<feature type="binding site" evidence="1">
    <location>
        <position position="126"/>
    </location>
    <ligand>
        <name>substrate</name>
    </ligand>
</feature>
<feature type="binding site" evidence="1">
    <location>
        <position position="164"/>
    </location>
    <ligand>
        <name>FMN</name>
        <dbReference type="ChEBI" id="CHEBI:58210"/>
    </ligand>
</feature>
<feature type="binding site" evidence="1">
    <location>
        <position position="190"/>
    </location>
    <ligand>
        <name>FMN</name>
        <dbReference type="ChEBI" id="CHEBI:58210"/>
    </ligand>
</feature>
<feature type="binding site" evidence="1">
    <location>
        <begin position="191"/>
        <end position="192"/>
    </location>
    <ligand>
        <name>substrate</name>
    </ligand>
</feature>
<feature type="binding site" evidence="1">
    <location>
        <position position="216"/>
    </location>
    <ligand>
        <name>FMN</name>
        <dbReference type="ChEBI" id="CHEBI:58210"/>
    </ligand>
</feature>
<feature type="binding site" evidence="1">
    <location>
        <begin position="244"/>
        <end position="245"/>
    </location>
    <ligand>
        <name>FMN</name>
        <dbReference type="ChEBI" id="CHEBI:58210"/>
    </ligand>
</feature>
<feature type="binding site" evidence="1">
    <location>
        <begin position="266"/>
        <end position="267"/>
    </location>
    <ligand>
        <name>FMN</name>
        <dbReference type="ChEBI" id="CHEBI:58210"/>
    </ligand>
</feature>
<keyword id="KW-0963">Cytoplasm</keyword>
<keyword id="KW-0285">Flavoprotein</keyword>
<keyword id="KW-0288">FMN</keyword>
<keyword id="KW-0560">Oxidoreductase</keyword>
<keyword id="KW-0665">Pyrimidine biosynthesis</keyword>
<keyword id="KW-1185">Reference proteome</keyword>
<proteinExistence type="inferred from homology"/>
<gene>
    <name type="primary">pyrD</name>
    <name type="ordered locus">aq_046</name>
</gene>
<dbReference type="EC" id="1.3.98.1"/>
<dbReference type="EMBL" id="AE000657">
    <property type="protein sequence ID" value="AAC06426.1"/>
    <property type="molecule type" value="Genomic_DNA"/>
</dbReference>
<dbReference type="PIR" id="B70304">
    <property type="entry name" value="B70304"/>
</dbReference>
<dbReference type="RefSeq" id="NP_213021.1">
    <property type="nucleotide sequence ID" value="NC_000918.1"/>
</dbReference>
<dbReference type="RefSeq" id="WP_010879959.1">
    <property type="nucleotide sequence ID" value="NC_000918.1"/>
</dbReference>
<dbReference type="SMR" id="O66461"/>
<dbReference type="FunCoup" id="O66461">
    <property type="interactions" value="196"/>
</dbReference>
<dbReference type="STRING" id="224324.aq_046"/>
<dbReference type="EnsemblBacteria" id="AAC06426">
    <property type="protein sequence ID" value="AAC06426"/>
    <property type="gene ID" value="aq_046"/>
</dbReference>
<dbReference type="KEGG" id="aae:aq_046"/>
<dbReference type="PATRIC" id="fig|224324.8.peg.37"/>
<dbReference type="eggNOG" id="COG0167">
    <property type="taxonomic scope" value="Bacteria"/>
</dbReference>
<dbReference type="HOGENOM" id="CLU_042042_0_0_0"/>
<dbReference type="InParanoid" id="O66461"/>
<dbReference type="OrthoDB" id="9794954at2"/>
<dbReference type="UniPathway" id="UPA00070"/>
<dbReference type="Proteomes" id="UP000000798">
    <property type="component" value="Chromosome"/>
</dbReference>
<dbReference type="GO" id="GO:0005737">
    <property type="term" value="C:cytoplasm"/>
    <property type="evidence" value="ECO:0000318"/>
    <property type="project" value="GO_Central"/>
</dbReference>
<dbReference type="GO" id="GO:1990663">
    <property type="term" value="F:dihydroorotate dehydrogenase (fumarate) activity"/>
    <property type="evidence" value="ECO:0007669"/>
    <property type="project" value="UniProtKB-EC"/>
</dbReference>
<dbReference type="GO" id="GO:0004152">
    <property type="term" value="F:dihydroorotate dehydrogenase activity"/>
    <property type="evidence" value="ECO:0000318"/>
    <property type="project" value="GO_Central"/>
</dbReference>
<dbReference type="GO" id="GO:0006207">
    <property type="term" value="P:'de novo' pyrimidine nucleobase biosynthetic process"/>
    <property type="evidence" value="ECO:0000318"/>
    <property type="project" value="GO_Central"/>
</dbReference>
<dbReference type="GO" id="GO:0044205">
    <property type="term" value="P:'de novo' UMP biosynthetic process"/>
    <property type="evidence" value="ECO:0007669"/>
    <property type="project" value="UniProtKB-UniRule"/>
</dbReference>
<dbReference type="CDD" id="cd04740">
    <property type="entry name" value="DHOD_1B_like"/>
    <property type="match status" value="1"/>
</dbReference>
<dbReference type="FunFam" id="3.20.20.70:FF:000027">
    <property type="entry name" value="Dihydropyrimidine dehydrogenase [NADP(+)]"/>
    <property type="match status" value="1"/>
</dbReference>
<dbReference type="Gene3D" id="3.20.20.70">
    <property type="entry name" value="Aldolase class I"/>
    <property type="match status" value="1"/>
</dbReference>
<dbReference type="HAMAP" id="MF_00224">
    <property type="entry name" value="DHO_dh_type1"/>
    <property type="match status" value="1"/>
</dbReference>
<dbReference type="InterPro" id="IPR013785">
    <property type="entry name" value="Aldolase_TIM"/>
</dbReference>
<dbReference type="InterPro" id="IPR050074">
    <property type="entry name" value="DHO_dehydrogenase"/>
</dbReference>
<dbReference type="InterPro" id="IPR033888">
    <property type="entry name" value="DHOD_1B"/>
</dbReference>
<dbReference type="InterPro" id="IPR024920">
    <property type="entry name" value="Dihydroorotate_DH_1"/>
</dbReference>
<dbReference type="InterPro" id="IPR012135">
    <property type="entry name" value="Dihydroorotate_DH_1_2"/>
</dbReference>
<dbReference type="InterPro" id="IPR005720">
    <property type="entry name" value="Dihydroorotate_DH_cat"/>
</dbReference>
<dbReference type="InterPro" id="IPR001295">
    <property type="entry name" value="Dihydroorotate_DH_CS"/>
</dbReference>
<dbReference type="InterPro" id="IPR049622">
    <property type="entry name" value="Dihydroorotate_DH_I"/>
</dbReference>
<dbReference type="NCBIfam" id="NF005574">
    <property type="entry name" value="PRK07259.1"/>
    <property type="match status" value="1"/>
</dbReference>
<dbReference type="NCBIfam" id="TIGR01037">
    <property type="entry name" value="pyrD_sub1_fam"/>
    <property type="match status" value="1"/>
</dbReference>
<dbReference type="PANTHER" id="PTHR48109:SF1">
    <property type="entry name" value="DIHYDROOROTATE DEHYDROGENASE (FUMARATE)"/>
    <property type="match status" value="1"/>
</dbReference>
<dbReference type="PANTHER" id="PTHR48109">
    <property type="entry name" value="DIHYDROOROTATE DEHYDROGENASE (QUINONE), MITOCHONDRIAL-RELATED"/>
    <property type="match status" value="1"/>
</dbReference>
<dbReference type="Pfam" id="PF01180">
    <property type="entry name" value="DHO_dh"/>
    <property type="match status" value="1"/>
</dbReference>
<dbReference type="PIRSF" id="PIRSF000164">
    <property type="entry name" value="DHO_oxidase"/>
    <property type="match status" value="1"/>
</dbReference>
<dbReference type="SUPFAM" id="SSF51395">
    <property type="entry name" value="FMN-linked oxidoreductases"/>
    <property type="match status" value="1"/>
</dbReference>
<dbReference type="PROSITE" id="PS00911">
    <property type="entry name" value="DHODEHASE_1"/>
    <property type="match status" value="1"/>
</dbReference>
<dbReference type="PROSITE" id="PS00912">
    <property type="entry name" value="DHODEHASE_2"/>
    <property type="match status" value="1"/>
</dbReference>
<accession>O66461</accession>
<reference key="1">
    <citation type="journal article" date="1998" name="Nature">
        <title>The complete genome of the hyperthermophilic bacterium Aquifex aeolicus.</title>
        <authorList>
            <person name="Deckert G."/>
            <person name="Warren P.V."/>
            <person name="Gaasterland T."/>
            <person name="Young W.G."/>
            <person name="Lenox A.L."/>
            <person name="Graham D.E."/>
            <person name="Overbeek R."/>
            <person name="Snead M.A."/>
            <person name="Keller M."/>
            <person name="Aujay M."/>
            <person name="Huber R."/>
            <person name="Feldman R.A."/>
            <person name="Short J.M."/>
            <person name="Olsen G.J."/>
            <person name="Swanson R.V."/>
        </authorList>
    </citation>
    <scope>NUCLEOTIDE SEQUENCE [LARGE SCALE GENOMIC DNA]</scope>
    <source>
        <strain>VF5</strain>
    </source>
</reference>
<name>PYRDA_AQUAE</name>
<evidence type="ECO:0000250" key="1"/>
<evidence type="ECO:0000305" key="2"/>
<protein>
    <recommendedName>
        <fullName>Putative dihydroorotate dehydrogenase A (fumarate)</fullName>
        <shortName>DHOD A</shortName>
        <shortName>DHODase A</shortName>
        <shortName>DHOdehase A</shortName>
        <ecNumber>1.3.98.1</ecNumber>
    </recommendedName>
</protein>
<organism>
    <name type="scientific">Aquifex aeolicus (strain VF5)</name>
    <dbReference type="NCBI Taxonomy" id="224324"/>
    <lineage>
        <taxon>Bacteria</taxon>
        <taxon>Pseudomonadati</taxon>
        <taxon>Aquificota</taxon>
        <taxon>Aquificia</taxon>
        <taxon>Aquificales</taxon>
        <taxon>Aquificaceae</taxon>
        <taxon>Aquifex</taxon>
    </lineage>
</organism>